<evidence type="ECO:0000250" key="1">
    <source>
        <dbReference type="UniProtKB" id="Q8BZ71"/>
    </source>
</evidence>
<evidence type="ECO:0000255" key="2">
    <source>
        <dbReference type="PROSITE-ProRule" id="PRU00192"/>
    </source>
</evidence>
<evidence type="ECO:0000255" key="3">
    <source>
        <dbReference type="PROSITE-ProRule" id="PRU00226"/>
    </source>
</evidence>
<evidence type="ECO:0000256" key="4">
    <source>
        <dbReference type="SAM" id="MobiDB-lite"/>
    </source>
</evidence>
<evidence type="ECO:0000269" key="5">
    <source>
    </source>
</evidence>
<evidence type="ECO:0000303" key="6">
    <source>
    </source>
</evidence>
<evidence type="ECO:0000312" key="7">
    <source>
        <dbReference type="EMBL" id="AAH78395.1"/>
    </source>
</evidence>
<evidence type="ECO:0000312" key="8">
    <source>
        <dbReference type="ZFIN" id="ZDB-GENE-040801-248"/>
    </source>
</evidence>
<reference key="1">
    <citation type="journal article" date="2013" name="Nature">
        <title>The zebrafish reference genome sequence and its relationship to the human genome.</title>
        <authorList>
            <person name="Howe K."/>
            <person name="Clark M.D."/>
            <person name="Torroja C.F."/>
            <person name="Torrance J."/>
            <person name="Berthelot C."/>
            <person name="Muffato M."/>
            <person name="Collins J.E."/>
            <person name="Humphray S."/>
            <person name="McLaren K."/>
            <person name="Matthews L."/>
            <person name="McLaren S."/>
            <person name="Sealy I."/>
            <person name="Caccamo M."/>
            <person name="Churcher C."/>
            <person name="Scott C."/>
            <person name="Barrett J.C."/>
            <person name="Koch R."/>
            <person name="Rauch G.J."/>
            <person name="White S."/>
            <person name="Chow W."/>
            <person name="Kilian B."/>
            <person name="Quintais L.T."/>
            <person name="Guerra-Assuncao J.A."/>
            <person name="Zhou Y."/>
            <person name="Gu Y."/>
            <person name="Yen J."/>
            <person name="Vogel J.H."/>
            <person name="Eyre T."/>
            <person name="Redmond S."/>
            <person name="Banerjee R."/>
            <person name="Chi J."/>
            <person name="Fu B."/>
            <person name="Langley E."/>
            <person name="Maguire S.F."/>
            <person name="Laird G.K."/>
            <person name="Lloyd D."/>
            <person name="Kenyon E."/>
            <person name="Donaldson S."/>
            <person name="Sehra H."/>
            <person name="Almeida-King J."/>
            <person name="Loveland J."/>
            <person name="Trevanion S."/>
            <person name="Jones M."/>
            <person name="Quail M."/>
            <person name="Willey D."/>
            <person name="Hunt A."/>
            <person name="Burton J."/>
            <person name="Sims S."/>
            <person name="McLay K."/>
            <person name="Plumb B."/>
            <person name="Davis J."/>
            <person name="Clee C."/>
            <person name="Oliver K."/>
            <person name="Clark R."/>
            <person name="Riddle C."/>
            <person name="Elliot D."/>
            <person name="Threadgold G."/>
            <person name="Harden G."/>
            <person name="Ware D."/>
            <person name="Begum S."/>
            <person name="Mortimore B."/>
            <person name="Kerry G."/>
            <person name="Heath P."/>
            <person name="Phillimore B."/>
            <person name="Tracey A."/>
            <person name="Corby N."/>
            <person name="Dunn M."/>
            <person name="Johnson C."/>
            <person name="Wood J."/>
            <person name="Clark S."/>
            <person name="Pelan S."/>
            <person name="Griffiths G."/>
            <person name="Smith M."/>
            <person name="Glithero R."/>
            <person name="Howden P."/>
            <person name="Barker N."/>
            <person name="Lloyd C."/>
            <person name="Stevens C."/>
            <person name="Harley J."/>
            <person name="Holt K."/>
            <person name="Panagiotidis G."/>
            <person name="Lovell J."/>
            <person name="Beasley H."/>
            <person name="Henderson C."/>
            <person name="Gordon D."/>
            <person name="Auger K."/>
            <person name="Wright D."/>
            <person name="Collins J."/>
            <person name="Raisen C."/>
            <person name="Dyer L."/>
            <person name="Leung K."/>
            <person name="Robertson L."/>
            <person name="Ambridge K."/>
            <person name="Leongamornlert D."/>
            <person name="McGuire S."/>
            <person name="Gilderthorp R."/>
            <person name="Griffiths C."/>
            <person name="Manthravadi D."/>
            <person name="Nichol S."/>
            <person name="Barker G."/>
            <person name="Whitehead S."/>
            <person name="Kay M."/>
            <person name="Brown J."/>
            <person name="Murnane C."/>
            <person name="Gray E."/>
            <person name="Humphries M."/>
            <person name="Sycamore N."/>
            <person name="Barker D."/>
            <person name="Saunders D."/>
            <person name="Wallis J."/>
            <person name="Babbage A."/>
            <person name="Hammond S."/>
            <person name="Mashreghi-Mohammadi M."/>
            <person name="Barr L."/>
            <person name="Martin S."/>
            <person name="Wray P."/>
            <person name="Ellington A."/>
            <person name="Matthews N."/>
            <person name="Ellwood M."/>
            <person name="Woodmansey R."/>
            <person name="Clark G."/>
            <person name="Cooper J."/>
            <person name="Tromans A."/>
            <person name="Grafham D."/>
            <person name="Skuce C."/>
            <person name="Pandian R."/>
            <person name="Andrews R."/>
            <person name="Harrison E."/>
            <person name="Kimberley A."/>
            <person name="Garnett J."/>
            <person name="Fosker N."/>
            <person name="Hall R."/>
            <person name="Garner P."/>
            <person name="Kelly D."/>
            <person name="Bird C."/>
            <person name="Palmer S."/>
            <person name="Gehring I."/>
            <person name="Berger A."/>
            <person name="Dooley C.M."/>
            <person name="Ersan-Urun Z."/>
            <person name="Eser C."/>
            <person name="Geiger H."/>
            <person name="Geisler M."/>
            <person name="Karotki L."/>
            <person name="Kirn A."/>
            <person name="Konantz J."/>
            <person name="Konantz M."/>
            <person name="Oberlander M."/>
            <person name="Rudolph-Geiger S."/>
            <person name="Teucke M."/>
            <person name="Lanz C."/>
            <person name="Raddatz G."/>
            <person name="Osoegawa K."/>
            <person name="Zhu B."/>
            <person name="Rapp A."/>
            <person name="Widaa S."/>
            <person name="Langford C."/>
            <person name="Yang F."/>
            <person name="Schuster S.C."/>
            <person name="Carter N.P."/>
            <person name="Harrow J."/>
            <person name="Ning Z."/>
            <person name="Herrero J."/>
            <person name="Searle S.M."/>
            <person name="Enright A."/>
            <person name="Geisler R."/>
            <person name="Plasterk R.H."/>
            <person name="Lee C."/>
            <person name="Westerfield M."/>
            <person name="de Jong P.J."/>
            <person name="Zon L.I."/>
            <person name="Postlethwait J.H."/>
            <person name="Nusslein-Volhard C."/>
            <person name="Hubbard T.J."/>
            <person name="Roest Crollius H."/>
            <person name="Rogers J."/>
            <person name="Stemple D.L."/>
        </authorList>
    </citation>
    <scope>NUCLEOTIDE SEQUENCE [LARGE SCALE GENOMIC DNA]</scope>
    <source>
        <strain>Tuebingen</strain>
    </source>
</reference>
<reference key="2">
    <citation type="submission" date="2004-07" db="EMBL/GenBank/DDBJ databases">
        <authorList>
            <consortium name="NIH - Zebrafish Gene Collection (ZGC) project"/>
        </authorList>
    </citation>
    <scope>NUCLEOTIDE SEQUENCE [LARGE SCALE MRNA]</scope>
</reference>
<reference key="3">
    <citation type="journal article" date="2013" name="Nat. Commun.">
        <title>Stac3 is a component of the excitation-contraction coupling machinery and mutated in Native American myopathy.</title>
        <authorList>
            <person name="Horstick E.J."/>
            <person name="Linsley J.W."/>
            <person name="Dowling J.J."/>
            <person name="Hauser M.A."/>
            <person name="McDonald K.K."/>
            <person name="Ashley-Koch A."/>
            <person name="Saint-Amant L."/>
            <person name="Satish A."/>
            <person name="Cui W.W."/>
            <person name="Zhou W."/>
            <person name="Sprague S.M."/>
            <person name="Stamm D.S."/>
            <person name="Powell C.M."/>
            <person name="Speer M.C."/>
            <person name="Franzini-Armstrong C."/>
            <person name="Hirata H."/>
            <person name="Kuwada J.Y."/>
        </authorList>
    </citation>
    <scope>DISRUPTION PHENOTYPE</scope>
    <scope>FUNCTION</scope>
    <scope>INTERACTION WITH CACNA1S</scope>
    <scope>TISSUE SPECIFICITY</scope>
    <scope>DEVELOPMENTAL STAGE</scope>
</reference>
<name>STAC3_DANRE</name>
<proteinExistence type="evidence at protein level"/>
<protein>
    <recommendedName>
        <fullName>SH3 and cysteine-rich domain-containing protein 3</fullName>
    </recommendedName>
</protein>
<accession>Q6DBR6</accession>
<sequence>MAQYDQLEDKDSLDIHDNPPAPENVVKEDDNTVYFVYDEEVEEEEAPPPPTPEPIVQVNDKPHKFKDHYCKKPKFCDVCARMIVLNNKFALRCKNCKTNIHHSCQSYVQFQRCFGKIPPGFRRAYSSPLYDQEINNPGQQNRTDPVFDTLRVGVIMANKERKKGSEDKKNMMMMMMEEEEAQQPKEDEEGAEGKQDGDKKDKTATDDKNKKQQQTFSQSHYYMALYRFKAIEKDDLDFHPGDRITVLDDSNEEWWRGKIGEKTGYLPMTYIIRVRAGERVYKVTRSFVGNREMGQITLKKDQIVVKKGEEVNGYLKVSTGRKLGFFPADLLHEL</sequence>
<gene>
    <name evidence="8" type="primary">stac3</name>
</gene>
<keyword id="KW-1003">Cell membrane</keyword>
<keyword id="KW-0963">Cytoplasm</keyword>
<keyword id="KW-0472">Membrane</keyword>
<keyword id="KW-0479">Metal-binding</keyword>
<keyword id="KW-1185">Reference proteome</keyword>
<keyword id="KW-0677">Repeat</keyword>
<keyword id="KW-0728">SH3 domain</keyword>
<keyword id="KW-0862">Zinc</keyword>
<keyword id="KW-0863">Zinc-finger</keyword>
<feature type="chain" id="PRO_0000430689" description="SH3 and cysteine-rich domain-containing protein 3">
    <location>
        <begin position="1"/>
        <end position="334"/>
    </location>
</feature>
<feature type="domain" description="SH3 1" evidence="2">
    <location>
        <begin position="217"/>
        <end position="276"/>
    </location>
</feature>
<feature type="domain" description="SH3 2" evidence="2">
    <location>
        <begin position="277"/>
        <end position="334"/>
    </location>
</feature>
<feature type="zinc finger region" description="Phorbol-ester/DAG-type" evidence="3">
    <location>
        <begin position="62"/>
        <end position="113"/>
    </location>
</feature>
<feature type="region of interest" description="Disordered" evidence="4">
    <location>
        <begin position="1"/>
        <end position="26"/>
    </location>
</feature>
<feature type="region of interest" description="Disordered" evidence="4">
    <location>
        <begin position="178"/>
        <end position="215"/>
    </location>
</feature>
<feature type="compositionally biased region" description="Basic and acidic residues" evidence="4">
    <location>
        <begin position="7"/>
        <end position="17"/>
    </location>
</feature>
<feature type="compositionally biased region" description="Acidic residues" evidence="4">
    <location>
        <begin position="178"/>
        <end position="190"/>
    </location>
</feature>
<feature type="compositionally biased region" description="Basic and acidic residues" evidence="4">
    <location>
        <begin position="191"/>
        <end position="210"/>
    </location>
</feature>
<comment type="function">
    <text evidence="1 5">Required for normal excitation-contraction coupling in skeletal muscle and for normal muscle contraction in response to membrane depolarization (PubMed:23736855). Required for normal Ca(2+) release from the sarcplasmic reticulum, which ultimately leads to muscle contraction. Probably functions via its effects on muscle calcium channels. Increases CACNA1S channel activity, in addition to its role in enhancing the expression of CACNA1S at the cell membrane. Has a redundant role in promoting the expression of the calcium channel CACNA1S at the cell membrane (By similarity).</text>
</comment>
<comment type="subunit">
    <text evidence="6">Component of a calcium channel complex with CACNA1S.</text>
</comment>
<comment type="subcellular location">
    <subcellularLocation>
        <location evidence="1">Cytoplasm</location>
    </subcellularLocation>
    <subcellularLocation>
        <location evidence="5">Cell membrane</location>
        <location evidence="5">Sarcolemma</location>
        <topology evidence="1">Peripheral membrane protein</topology>
        <orientation evidence="1">Cytoplasmic side</orientation>
    </subcellularLocation>
    <subcellularLocation>
        <location evidence="5">Cell membrane</location>
        <location evidence="5">Sarcolemma</location>
        <location evidence="5">T-tubule</location>
    </subcellularLocation>
</comment>
<comment type="tissue specificity">
    <text evidence="5">Expressed in muscles at the muscle triad.</text>
</comment>
<comment type="developmental stage">
    <text evidence="5">Expressed during embryogenesis (at protein level).</text>
</comment>
<comment type="disruption phenotype">
    <text evidence="5">The mutants mi34 that do not express the protein exhibit altered motor behavior most probably due to a defect in the coupling between the electrophysiological activation and the muscular response. The nervous system, the neuromuscular junction or the skeletal muscles seem normal.</text>
</comment>
<dbReference type="EMBL" id="CR753874">
    <property type="status" value="NOT_ANNOTATED_CDS"/>
    <property type="molecule type" value="Genomic_DNA"/>
</dbReference>
<dbReference type="EMBL" id="BC078395">
    <property type="protein sequence ID" value="AAH78395.1"/>
    <property type="molecule type" value="mRNA"/>
</dbReference>
<dbReference type="RefSeq" id="NP_001003505.1">
    <property type="nucleotide sequence ID" value="NM_001003505.2"/>
</dbReference>
<dbReference type="SMR" id="Q6DBR6"/>
<dbReference type="FunCoup" id="Q6DBR6">
    <property type="interactions" value="1839"/>
</dbReference>
<dbReference type="STRING" id="7955.ENSDARP00000133228"/>
<dbReference type="PaxDb" id="7955-ENSDARP00000100517"/>
<dbReference type="Ensembl" id="ENSDART00000163474">
    <property type="protein sequence ID" value="ENSDARP00000133228"/>
    <property type="gene ID" value="ENSDARG00000098883"/>
</dbReference>
<dbReference type="Ensembl" id="ENSDART00000193970">
    <property type="protein sequence ID" value="ENSDARP00000151899"/>
    <property type="gene ID" value="ENSDARG00000098883"/>
</dbReference>
<dbReference type="GeneID" id="445111"/>
<dbReference type="KEGG" id="dre:445111"/>
<dbReference type="AGR" id="ZFIN:ZDB-GENE-040801-248"/>
<dbReference type="CTD" id="246329"/>
<dbReference type="ZFIN" id="ZDB-GENE-040801-248">
    <property type="gene designation" value="stac3"/>
</dbReference>
<dbReference type="eggNOG" id="ENOG502QT6I">
    <property type="taxonomic scope" value="Eukaryota"/>
</dbReference>
<dbReference type="HOGENOM" id="CLU_048120_1_1_1"/>
<dbReference type="InParanoid" id="Q6DBR6"/>
<dbReference type="OMA" id="KNMLMMM"/>
<dbReference type="OrthoDB" id="6250593at2759"/>
<dbReference type="PhylomeDB" id="Q6DBR6"/>
<dbReference type="TreeFam" id="TF332878"/>
<dbReference type="PRO" id="PR:Q6DBR6"/>
<dbReference type="Proteomes" id="UP000000437">
    <property type="component" value="Chromosome 9"/>
</dbReference>
<dbReference type="Bgee" id="ENSDARG00000098883">
    <property type="expression patterns" value="Expressed in muscle tissue and 18 other cell types or tissues"/>
</dbReference>
<dbReference type="ExpressionAtlas" id="Q6DBR6">
    <property type="expression patterns" value="differential"/>
</dbReference>
<dbReference type="GO" id="GO:0009898">
    <property type="term" value="C:cytoplasmic side of plasma membrane"/>
    <property type="evidence" value="ECO:0000250"/>
    <property type="project" value="UniProtKB"/>
</dbReference>
<dbReference type="GO" id="GO:0005829">
    <property type="term" value="C:cytosol"/>
    <property type="evidence" value="ECO:0000250"/>
    <property type="project" value="UniProtKB"/>
</dbReference>
<dbReference type="GO" id="GO:0030315">
    <property type="term" value="C:T-tubule"/>
    <property type="evidence" value="ECO:0007669"/>
    <property type="project" value="UniProtKB-SubCell"/>
</dbReference>
<dbReference type="GO" id="GO:0005891">
    <property type="term" value="C:voltage-gated calcium channel complex"/>
    <property type="evidence" value="ECO:0000250"/>
    <property type="project" value="UniProtKB"/>
</dbReference>
<dbReference type="GO" id="GO:0008270">
    <property type="term" value="F:zinc ion binding"/>
    <property type="evidence" value="ECO:0007669"/>
    <property type="project" value="UniProtKB-KW"/>
</dbReference>
<dbReference type="GO" id="GO:1903078">
    <property type="term" value="P:positive regulation of protein localization to plasma membrane"/>
    <property type="evidence" value="ECO:0000250"/>
    <property type="project" value="UniProtKB"/>
</dbReference>
<dbReference type="GO" id="GO:1901387">
    <property type="term" value="P:positive regulation of voltage-gated calcium channel activity"/>
    <property type="evidence" value="ECO:0000250"/>
    <property type="project" value="UniProtKB"/>
</dbReference>
<dbReference type="GO" id="GO:0010880">
    <property type="term" value="P:regulation of release of sequestered calcium ion into cytosol by sarcoplasmic reticulum"/>
    <property type="evidence" value="ECO:0000315"/>
    <property type="project" value="ZFIN"/>
</dbReference>
<dbReference type="GO" id="GO:0003009">
    <property type="term" value="P:skeletal muscle contraction"/>
    <property type="evidence" value="ECO:0000315"/>
    <property type="project" value="ZFIN"/>
</dbReference>
<dbReference type="GO" id="GO:0007519">
    <property type="term" value="P:skeletal muscle tissue development"/>
    <property type="evidence" value="ECO:0000315"/>
    <property type="project" value="ZFIN"/>
</dbReference>
<dbReference type="GO" id="GO:0033292">
    <property type="term" value="P:T-tubule organization"/>
    <property type="evidence" value="ECO:0000315"/>
    <property type="project" value="ZFIN"/>
</dbReference>
<dbReference type="CDD" id="cd20882">
    <property type="entry name" value="C1_Stac3"/>
    <property type="match status" value="1"/>
</dbReference>
<dbReference type="FunFam" id="3.30.60.20:FF:000022">
    <property type="entry name" value="SH3 and cysteine-rich domain-containing protein 3 isoform 2"/>
    <property type="match status" value="1"/>
</dbReference>
<dbReference type="FunFam" id="2.30.30.40:FF:000167">
    <property type="entry name" value="SH3 and cysteine-rich domain-containing protein 3 isoform X1"/>
    <property type="match status" value="1"/>
</dbReference>
<dbReference type="Gene3D" id="3.30.60.20">
    <property type="match status" value="1"/>
</dbReference>
<dbReference type="Gene3D" id="2.30.30.40">
    <property type="entry name" value="SH3 Domains"/>
    <property type="match status" value="1"/>
</dbReference>
<dbReference type="InterPro" id="IPR046349">
    <property type="entry name" value="C1-like_sf"/>
</dbReference>
<dbReference type="InterPro" id="IPR002219">
    <property type="entry name" value="PE/DAG-bd"/>
</dbReference>
<dbReference type="InterPro" id="IPR036028">
    <property type="entry name" value="SH3-like_dom_sf"/>
</dbReference>
<dbReference type="InterPro" id="IPR001452">
    <property type="entry name" value="SH3_domain"/>
</dbReference>
<dbReference type="InterPro" id="IPR039688">
    <property type="entry name" value="STAC1/2/3"/>
</dbReference>
<dbReference type="PANTHER" id="PTHR15135:SF2">
    <property type="entry name" value="SH3 AND CYSTEINE-RICH DOMAIN-CONTAINING PROTEIN 3"/>
    <property type="match status" value="1"/>
</dbReference>
<dbReference type="PANTHER" id="PTHR15135">
    <property type="entry name" value="STAC"/>
    <property type="match status" value="1"/>
</dbReference>
<dbReference type="Pfam" id="PF00130">
    <property type="entry name" value="C1_1"/>
    <property type="match status" value="1"/>
</dbReference>
<dbReference type="Pfam" id="PF00018">
    <property type="entry name" value="SH3_1"/>
    <property type="match status" value="1"/>
</dbReference>
<dbReference type="Pfam" id="PF07653">
    <property type="entry name" value="SH3_2"/>
    <property type="match status" value="1"/>
</dbReference>
<dbReference type="Pfam" id="PF16664">
    <property type="entry name" value="STAC2_u1"/>
    <property type="match status" value="1"/>
</dbReference>
<dbReference type="PRINTS" id="PR00499">
    <property type="entry name" value="P67PHOX"/>
</dbReference>
<dbReference type="PRINTS" id="PR00452">
    <property type="entry name" value="SH3DOMAIN"/>
</dbReference>
<dbReference type="SMART" id="SM00109">
    <property type="entry name" value="C1"/>
    <property type="match status" value="1"/>
</dbReference>
<dbReference type="SMART" id="SM00326">
    <property type="entry name" value="SH3"/>
    <property type="match status" value="2"/>
</dbReference>
<dbReference type="SUPFAM" id="SSF57889">
    <property type="entry name" value="Cysteine-rich domain"/>
    <property type="match status" value="1"/>
</dbReference>
<dbReference type="SUPFAM" id="SSF50044">
    <property type="entry name" value="SH3-domain"/>
    <property type="match status" value="1"/>
</dbReference>
<dbReference type="PROSITE" id="PS50002">
    <property type="entry name" value="SH3"/>
    <property type="match status" value="2"/>
</dbReference>
<dbReference type="PROSITE" id="PS00479">
    <property type="entry name" value="ZF_DAG_PE_1"/>
    <property type="match status" value="1"/>
</dbReference>
<dbReference type="PROSITE" id="PS50081">
    <property type="entry name" value="ZF_DAG_PE_2"/>
    <property type="match status" value="1"/>
</dbReference>
<organism evidence="7">
    <name type="scientific">Danio rerio</name>
    <name type="common">Zebrafish</name>
    <name type="synonym">Brachydanio rerio</name>
    <dbReference type="NCBI Taxonomy" id="7955"/>
    <lineage>
        <taxon>Eukaryota</taxon>
        <taxon>Metazoa</taxon>
        <taxon>Chordata</taxon>
        <taxon>Craniata</taxon>
        <taxon>Vertebrata</taxon>
        <taxon>Euteleostomi</taxon>
        <taxon>Actinopterygii</taxon>
        <taxon>Neopterygii</taxon>
        <taxon>Teleostei</taxon>
        <taxon>Ostariophysi</taxon>
        <taxon>Cypriniformes</taxon>
        <taxon>Danionidae</taxon>
        <taxon>Danioninae</taxon>
        <taxon>Danio</taxon>
    </lineage>
</organism>